<accession>Q58087</accession>
<comment type="cofactor">
    <cofactor evidence="3">
        <name>[4Fe-4S] cluster</name>
        <dbReference type="ChEBI" id="CHEBI:49883"/>
    </cofactor>
    <text evidence="3">Binds 1 [4Fe-4S] cluster. The cluster is coordinated with 3 cysteines and an exchangeable S-adenosyl-L-methionine.</text>
</comment>
<dbReference type="EMBL" id="L77117">
    <property type="protein sequence ID" value="AAB98668.1"/>
    <property type="molecule type" value="Genomic_DNA"/>
</dbReference>
<dbReference type="PIR" id="B64384">
    <property type="entry name" value="B64384"/>
</dbReference>
<dbReference type="RefSeq" id="WP_010870179.1">
    <property type="nucleotide sequence ID" value="NC_000909.1"/>
</dbReference>
<dbReference type="SMR" id="Q58087"/>
<dbReference type="STRING" id="243232.MJ_0674"/>
<dbReference type="PaxDb" id="243232-MJ_0674"/>
<dbReference type="EnsemblBacteria" id="AAB98668">
    <property type="protein sequence ID" value="AAB98668"/>
    <property type="gene ID" value="MJ_0674"/>
</dbReference>
<dbReference type="GeneID" id="1451540"/>
<dbReference type="KEGG" id="mja:MJ_0674"/>
<dbReference type="eggNOG" id="arCOG00934">
    <property type="taxonomic scope" value="Archaea"/>
</dbReference>
<dbReference type="HOGENOM" id="CLU_062674_0_1_2"/>
<dbReference type="InParanoid" id="Q58087"/>
<dbReference type="OrthoDB" id="371936at2157"/>
<dbReference type="PhylomeDB" id="Q58087"/>
<dbReference type="Proteomes" id="UP000000805">
    <property type="component" value="Chromosome"/>
</dbReference>
<dbReference type="GO" id="GO:0051539">
    <property type="term" value="F:4 iron, 4 sulfur cluster binding"/>
    <property type="evidence" value="ECO:0007669"/>
    <property type="project" value="UniProtKB-KW"/>
</dbReference>
<dbReference type="GO" id="GO:0003824">
    <property type="term" value="F:catalytic activity"/>
    <property type="evidence" value="ECO:0007669"/>
    <property type="project" value="InterPro"/>
</dbReference>
<dbReference type="GO" id="GO:0046872">
    <property type="term" value="F:metal ion binding"/>
    <property type="evidence" value="ECO:0007669"/>
    <property type="project" value="UniProtKB-KW"/>
</dbReference>
<dbReference type="CDD" id="cd01335">
    <property type="entry name" value="Radical_SAM"/>
    <property type="match status" value="1"/>
</dbReference>
<dbReference type="Gene3D" id="3.20.20.70">
    <property type="entry name" value="Aldolase class I"/>
    <property type="match status" value="1"/>
</dbReference>
<dbReference type="InterPro" id="IPR013785">
    <property type="entry name" value="Aldolase_TIM"/>
</dbReference>
<dbReference type="InterPro" id="IPR040085">
    <property type="entry name" value="MJ0674-like"/>
</dbReference>
<dbReference type="InterPro" id="IPR016431">
    <property type="entry name" value="Pyrv-formate_lyase-activ_prd"/>
</dbReference>
<dbReference type="InterPro" id="IPR007197">
    <property type="entry name" value="rSAM"/>
</dbReference>
<dbReference type="PANTHER" id="PTHR43075">
    <property type="entry name" value="FORMATE LYASE ACTIVATING ENZYME, PUTATIVE (AFU_ORTHOLOGUE AFUA_2G15630)-RELATED"/>
    <property type="match status" value="1"/>
</dbReference>
<dbReference type="PANTHER" id="PTHR43075:SF1">
    <property type="entry name" value="FORMATE LYASE ACTIVATING ENZYME, PUTATIVE (AFU_ORTHOLOGUE AFUA_2G15630)-RELATED"/>
    <property type="match status" value="1"/>
</dbReference>
<dbReference type="Pfam" id="PF13353">
    <property type="entry name" value="Fer4_12"/>
    <property type="match status" value="1"/>
</dbReference>
<dbReference type="Pfam" id="PF04055">
    <property type="entry name" value="Radical_SAM"/>
    <property type="match status" value="1"/>
</dbReference>
<dbReference type="PIRSF" id="PIRSF004869">
    <property type="entry name" value="PflX_prd"/>
    <property type="match status" value="1"/>
</dbReference>
<dbReference type="SFLD" id="SFLDS00029">
    <property type="entry name" value="Radical_SAM"/>
    <property type="match status" value="1"/>
</dbReference>
<dbReference type="SFLD" id="SFLDG01099">
    <property type="entry name" value="Uncharacterised_Radical_SAM_Su"/>
    <property type="match status" value="1"/>
</dbReference>
<dbReference type="SUPFAM" id="SSF102114">
    <property type="entry name" value="Radical SAM enzymes"/>
    <property type="match status" value="1"/>
</dbReference>
<dbReference type="PROSITE" id="PS51918">
    <property type="entry name" value="RADICAL_SAM"/>
    <property type="match status" value="1"/>
</dbReference>
<reference key="1">
    <citation type="journal article" date="1996" name="Science">
        <title>Complete genome sequence of the methanogenic archaeon, Methanococcus jannaschii.</title>
        <authorList>
            <person name="Bult C.J."/>
            <person name="White O."/>
            <person name="Olsen G.J."/>
            <person name="Zhou L."/>
            <person name="Fleischmann R.D."/>
            <person name="Sutton G.G."/>
            <person name="Blake J.A."/>
            <person name="FitzGerald L.M."/>
            <person name="Clayton R.A."/>
            <person name="Gocayne J.D."/>
            <person name="Kerlavage A.R."/>
            <person name="Dougherty B.A."/>
            <person name="Tomb J.-F."/>
            <person name="Adams M.D."/>
            <person name="Reich C.I."/>
            <person name="Overbeek R."/>
            <person name="Kirkness E.F."/>
            <person name="Weinstock K.G."/>
            <person name="Merrick J.M."/>
            <person name="Glodek A."/>
            <person name="Scott J.L."/>
            <person name="Geoghagen N.S.M."/>
            <person name="Weidman J.F."/>
            <person name="Fuhrmann J.L."/>
            <person name="Nguyen D."/>
            <person name="Utterback T.R."/>
            <person name="Kelley J.M."/>
            <person name="Peterson J.D."/>
            <person name="Sadow P.W."/>
            <person name="Hanna M.C."/>
            <person name="Cotton M.D."/>
            <person name="Roberts K.M."/>
            <person name="Hurst M.A."/>
            <person name="Kaine B.P."/>
            <person name="Borodovsky M."/>
            <person name="Klenk H.-P."/>
            <person name="Fraser C.M."/>
            <person name="Smith H.O."/>
            <person name="Woese C.R."/>
            <person name="Venter J.C."/>
        </authorList>
    </citation>
    <scope>NUCLEOTIDE SEQUENCE [LARGE SCALE GENOMIC DNA]</scope>
    <source>
        <strain>ATCC 43067 / DSM 2661 / JAL-1 / JCM 10045 / NBRC 100440</strain>
    </source>
</reference>
<sequence>MKLGRYLAVSKDLAPAKFIIAKCIEVEEFKGLELNELWEIHNKVLKKVDFDNFDFNDLEYVKPNLLDLKVEIAKNIFKNCHFCEHRCYVNRETERGFCRIKESYYSTEFLHLGEERVLVPSHTIFFCGCNFKCVFCQNWDISQVYFDKTIPNHCIPYNPKEMAKIIKHKRDYSKNVNFVGGDPTPHLLSILKTLSYLDKNIPVVWNSNMYLTVEGMHLLKGVVDVYLTDFKFGNNECGERLSKVKNYFDIIKRNHLLIKDEEVIIRHLVMPNHLDCCTEKIFDFISKNLDNAVVNVMFQYRPEYKAKEYPDINRRLTYEEIEKALELAEKYNLDLIYD</sequence>
<name>Y674_METJA</name>
<organism>
    <name type="scientific">Methanocaldococcus jannaschii (strain ATCC 43067 / DSM 2661 / JAL-1 / JCM 10045 / NBRC 100440)</name>
    <name type="common">Methanococcus jannaschii</name>
    <dbReference type="NCBI Taxonomy" id="243232"/>
    <lineage>
        <taxon>Archaea</taxon>
        <taxon>Methanobacteriati</taxon>
        <taxon>Methanobacteriota</taxon>
        <taxon>Methanomada group</taxon>
        <taxon>Methanococci</taxon>
        <taxon>Methanococcales</taxon>
        <taxon>Methanocaldococcaceae</taxon>
        <taxon>Methanocaldococcus</taxon>
    </lineage>
</organism>
<keyword id="KW-0004">4Fe-4S</keyword>
<keyword id="KW-0408">Iron</keyword>
<keyword id="KW-0411">Iron-sulfur</keyword>
<keyword id="KW-0479">Metal-binding</keyword>
<keyword id="KW-1185">Reference proteome</keyword>
<keyword id="KW-0949">S-adenosyl-L-methionine</keyword>
<proteinExistence type="predicted"/>
<protein>
    <recommendedName>
        <fullName>Uncharacterized protein MJ0674</fullName>
    </recommendedName>
</protein>
<feature type="chain" id="PRO_0000106984" description="Uncharacterized protein MJ0674">
    <location>
        <begin position="1"/>
        <end position="338"/>
    </location>
</feature>
<feature type="domain" description="Radical SAM core" evidence="2">
    <location>
        <begin position="111"/>
        <end position="334"/>
    </location>
</feature>
<feature type="binding site" evidence="1">
    <location>
        <position position="129"/>
    </location>
    <ligand>
        <name>[4Fe-4S] cluster</name>
        <dbReference type="ChEBI" id="CHEBI:49883"/>
        <note>4Fe-4S-S-AdoMet</note>
    </ligand>
</feature>
<feature type="binding site" evidence="1">
    <location>
        <position position="133"/>
    </location>
    <ligand>
        <name>[4Fe-4S] cluster</name>
        <dbReference type="ChEBI" id="CHEBI:49883"/>
        <note>4Fe-4S-S-AdoMet</note>
    </ligand>
</feature>
<feature type="binding site" evidence="1">
    <location>
        <position position="136"/>
    </location>
    <ligand>
        <name>[4Fe-4S] cluster</name>
        <dbReference type="ChEBI" id="CHEBI:49883"/>
        <note>4Fe-4S-S-AdoMet</note>
    </ligand>
</feature>
<gene>
    <name type="ordered locus">MJ0674</name>
</gene>
<evidence type="ECO:0000255" key="1"/>
<evidence type="ECO:0000255" key="2">
    <source>
        <dbReference type="PROSITE-ProRule" id="PRU01266"/>
    </source>
</evidence>
<evidence type="ECO:0000305" key="3"/>